<gene>
    <name type="primary">graR</name>
    <name type="ordered locus">NWMN_0628</name>
</gene>
<reference key="1">
    <citation type="journal article" date="2008" name="J. Bacteriol.">
        <title>Genome sequence of Staphylococcus aureus strain Newman and comparative analysis of staphylococcal genomes: polymorphism and evolution of two major pathogenicity islands.</title>
        <authorList>
            <person name="Baba T."/>
            <person name="Bae T."/>
            <person name="Schneewind O."/>
            <person name="Takeuchi F."/>
            <person name="Hiramatsu K."/>
        </authorList>
    </citation>
    <scope>NUCLEOTIDE SEQUENCE [LARGE SCALE GENOMIC DNA]</scope>
    <source>
        <strain>Newman</strain>
    </source>
</reference>
<sequence length="224" mass="26079">MQILLVEDDNTLFQELKKELEQWDFNVAGIEDFGKVMDTFESFNPEIVILDVQLPKYDGFYWCRKMREVSNVPILFLSSRDNPMDQVMSMELGADDYMQKPFYTNVLIAKLQAIYRRVYEFTAEEKRTLTWQDAVVDLSKDSIQKGDQTIFLSKTEMIILEILITKKNQIVSRDTIITALWDDEAFVSDNTLTVNVNRLRKKLSEISMDSAIETKVGKGYMAHE</sequence>
<evidence type="ECO:0000250" key="1"/>
<evidence type="ECO:0000250" key="2">
    <source>
        <dbReference type="UniProtKB" id="Q2G0D9"/>
    </source>
</evidence>
<evidence type="ECO:0000250" key="3">
    <source>
        <dbReference type="UniProtKB" id="Q2G0E0"/>
    </source>
</evidence>
<evidence type="ECO:0000255" key="4">
    <source>
        <dbReference type="PROSITE-ProRule" id="PRU00169"/>
    </source>
</evidence>
<evidence type="ECO:0000255" key="5">
    <source>
        <dbReference type="PROSITE-ProRule" id="PRU01091"/>
    </source>
</evidence>
<organism>
    <name type="scientific">Staphylococcus aureus (strain Newman)</name>
    <dbReference type="NCBI Taxonomy" id="426430"/>
    <lineage>
        <taxon>Bacteria</taxon>
        <taxon>Bacillati</taxon>
        <taxon>Bacillota</taxon>
        <taxon>Bacilli</taxon>
        <taxon>Bacillales</taxon>
        <taxon>Staphylococcaceae</taxon>
        <taxon>Staphylococcus</taxon>
    </lineage>
</organism>
<feature type="chain" id="PRO_0000347906" description="Response regulator protein GraR">
    <location>
        <begin position="1"/>
        <end position="224"/>
    </location>
</feature>
<feature type="domain" description="Response regulatory" evidence="4">
    <location>
        <begin position="2"/>
        <end position="115"/>
    </location>
</feature>
<feature type="DNA-binding region" description="OmpR/PhoB-type" evidence="5">
    <location>
        <begin position="126"/>
        <end position="224"/>
    </location>
</feature>
<feature type="modified residue" description="4-aspartylphosphate" evidence="4">
    <location>
        <position position="51"/>
    </location>
</feature>
<feature type="modified residue" description="Phosphothreonine" evidence="3">
    <location>
        <position position="128"/>
    </location>
</feature>
<feature type="modified residue" description="Phosphothreonine" evidence="3">
    <location>
        <position position="130"/>
    </location>
</feature>
<feature type="modified residue" description="Phosphothreonine" evidence="3">
    <location>
        <position position="149"/>
    </location>
</feature>
<proteinExistence type="inferred from homology"/>
<protein>
    <recommendedName>
        <fullName>Response regulator protein GraR</fullName>
    </recommendedName>
    <alternativeName>
        <fullName>Glycopeptide resistance-associated protein R</fullName>
    </alternativeName>
</protein>
<name>GRAR_STAAE</name>
<accession>A6QEW8</accession>
<dbReference type="EMBL" id="AP009351">
    <property type="protein sequence ID" value="BAF66900.1"/>
    <property type="molecule type" value="Genomic_DNA"/>
</dbReference>
<dbReference type="RefSeq" id="WP_001166505.1">
    <property type="nucleotide sequence ID" value="NZ_JBBIAE010000002.1"/>
</dbReference>
<dbReference type="SMR" id="A6QEW8"/>
<dbReference type="KEGG" id="sae:NWMN_0628"/>
<dbReference type="HOGENOM" id="CLU_000445_30_3_9"/>
<dbReference type="Proteomes" id="UP000006386">
    <property type="component" value="Chromosome"/>
</dbReference>
<dbReference type="GO" id="GO:0005829">
    <property type="term" value="C:cytosol"/>
    <property type="evidence" value="ECO:0007669"/>
    <property type="project" value="TreeGrafter"/>
</dbReference>
<dbReference type="GO" id="GO:0032993">
    <property type="term" value="C:protein-DNA complex"/>
    <property type="evidence" value="ECO:0007669"/>
    <property type="project" value="TreeGrafter"/>
</dbReference>
<dbReference type="GO" id="GO:0000156">
    <property type="term" value="F:phosphorelay response regulator activity"/>
    <property type="evidence" value="ECO:0007669"/>
    <property type="project" value="TreeGrafter"/>
</dbReference>
<dbReference type="GO" id="GO:0000976">
    <property type="term" value="F:transcription cis-regulatory region binding"/>
    <property type="evidence" value="ECO:0007669"/>
    <property type="project" value="TreeGrafter"/>
</dbReference>
<dbReference type="GO" id="GO:0006355">
    <property type="term" value="P:regulation of DNA-templated transcription"/>
    <property type="evidence" value="ECO:0007669"/>
    <property type="project" value="InterPro"/>
</dbReference>
<dbReference type="GO" id="GO:0046677">
    <property type="term" value="P:response to antibiotic"/>
    <property type="evidence" value="ECO:0007669"/>
    <property type="project" value="UniProtKB-KW"/>
</dbReference>
<dbReference type="CDD" id="cd18159">
    <property type="entry name" value="REC_OmpR_NsrR-like"/>
    <property type="match status" value="1"/>
</dbReference>
<dbReference type="CDD" id="cd00383">
    <property type="entry name" value="trans_reg_C"/>
    <property type="match status" value="1"/>
</dbReference>
<dbReference type="FunFam" id="3.40.50.2300:FF:000232">
    <property type="entry name" value="Response regulator GraR"/>
    <property type="match status" value="1"/>
</dbReference>
<dbReference type="FunFam" id="1.10.10.10:FF:000546">
    <property type="entry name" value="Two-component response regulator GraR"/>
    <property type="match status" value="1"/>
</dbReference>
<dbReference type="Gene3D" id="3.40.50.2300">
    <property type="match status" value="1"/>
</dbReference>
<dbReference type="Gene3D" id="1.10.10.10">
    <property type="entry name" value="Winged helix-like DNA-binding domain superfamily/Winged helix DNA-binding domain"/>
    <property type="match status" value="1"/>
</dbReference>
<dbReference type="InterPro" id="IPR011006">
    <property type="entry name" value="CheY-like_superfamily"/>
</dbReference>
<dbReference type="InterPro" id="IPR001867">
    <property type="entry name" value="OmpR/PhoB-type_DNA-bd"/>
</dbReference>
<dbReference type="InterPro" id="IPR016032">
    <property type="entry name" value="Sig_transdc_resp-reg_C-effctor"/>
</dbReference>
<dbReference type="InterPro" id="IPR001789">
    <property type="entry name" value="Sig_transdc_resp-reg_receiver"/>
</dbReference>
<dbReference type="InterPro" id="IPR039420">
    <property type="entry name" value="WalR-like"/>
</dbReference>
<dbReference type="InterPro" id="IPR036388">
    <property type="entry name" value="WH-like_DNA-bd_sf"/>
</dbReference>
<dbReference type="PANTHER" id="PTHR48111">
    <property type="entry name" value="REGULATOR OF RPOS"/>
    <property type="match status" value="1"/>
</dbReference>
<dbReference type="PANTHER" id="PTHR48111:SF27">
    <property type="entry name" value="SENSORY TRANSDUCTION PROTEIN BCER"/>
    <property type="match status" value="1"/>
</dbReference>
<dbReference type="Pfam" id="PF00072">
    <property type="entry name" value="Response_reg"/>
    <property type="match status" value="1"/>
</dbReference>
<dbReference type="Pfam" id="PF00486">
    <property type="entry name" value="Trans_reg_C"/>
    <property type="match status" value="1"/>
</dbReference>
<dbReference type="SMART" id="SM00448">
    <property type="entry name" value="REC"/>
    <property type="match status" value="1"/>
</dbReference>
<dbReference type="SMART" id="SM00862">
    <property type="entry name" value="Trans_reg_C"/>
    <property type="match status" value="1"/>
</dbReference>
<dbReference type="SUPFAM" id="SSF46894">
    <property type="entry name" value="C-terminal effector domain of the bipartite response regulators"/>
    <property type="match status" value="1"/>
</dbReference>
<dbReference type="SUPFAM" id="SSF52172">
    <property type="entry name" value="CheY-like"/>
    <property type="match status" value="1"/>
</dbReference>
<dbReference type="PROSITE" id="PS51755">
    <property type="entry name" value="OMPR_PHOB"/>
    <property type="match status" value="1"/>
</dbReference>
<dbReference type="PROSITE" id="PS50110">
    <property type="entry name" value="RESPONSE_REGULATORY"/>
    <property type="match status" value="1"/>
</dbReference>
<keyword id="KW-0010">Activator</keyword>
<keyword id="KW-0046">Antibiotic resistance</keyword>
<keyword id="KW-0963">Cytoplasm</keyword>
<keyword id="KW-0238">DNA-binding</keyword>
<keyword id="KW-0597">Phosphoprotein</keyword>
<keyword id="KW-0678">Repressor</keyword>
<keyword id="KW-0804">Transcription</keyword>
<keyword id="KW-0805">Transcription regulation</keyword>
<keyword id="KW-0902">Two-component regulatory system</keyword>
<keyword id="KW-0843">Virulence</keyword>
<comment type="function">
    <text evidence="3">Member of the two-component regulatory system GraR/GraS involved in resistance against cationic antimicrobial peptides (CAMPs). Upon phosphorylation by GraS, functions as a transcription regulator by direct binding to promoter regions of target genes such as adhesins, exoproteins, transporters, toxins, and proteins involved in cell wall synthesis. Down-regulates the expression of many genes involved in RNA and amino acid synthesis or glycolysis.</text>
</comment>
<comment type="subunit">
    <text evidence="2">Interacts with GraX.</text>
</comment>
<comment type="subcellular location">
    <subcellularLocation>
        <location evidence="1">Cytoplasm</location>
    </subcellularLocation>
</comment>
<comment type="PTM">
    <text evidence="3">Phosphorylated by GraS. Phosphorylated by Stk1; phosphorylation increases the DNA-binding activity of GraR.</text>
</comment>